<feature type="chain" id="PRO_1000134783" description="Transcriptional regulator MraZ">
    <location>
        <begin position="1"/>
        <end position="143"/>
    </location>
</feature>
<feature type="domain" description="SpoVT-AbrB 1" evidence="2">
    <location>
        <begin position="5"/>
        <end position="47"/>
    </location>
</feature>
<feature type="domain" description="SpoVT-AbrB 2" evidence="2">
    <location>
        <begin position="76"/>
        <end position="119"/>
    </location>
</feature>
<comment type="subunit">
    <text evidence="1">Forms oligomers.</text>
</comment>
<comment type="subcellular location">
    <subcellularLocation>
        <location evidence="1">Cytoplasm</location>
        <location evidence="1">Nucleoid</location>
    </subcellularLocation>
</comment>
<comment type="similarity">
    <text evidence="1">Belongs to the MraZ family.</text>
</comment>
<keyword id="KW-0963">Cytoplasm</keyword>
<keyword id="KW-0238">DNA-binding</keyword>
<keyword id="KW-1185">Reference proteome</keyword>
<keyword id="KW-0677">Repeat</keyword>
<keyword id="KW-0804">Transcription</keyword>
<keyword id="KW-0805">Transcription regulation</keyword>
<proteinExistence type="inferred from homology"/>
<reference key="1">
    <citation type="journal article" date="2008" name="J. Biotechnol.">
        <title>The lifestyle of Corynebacterium urealyticum derived from its complete genome sequence established by pyrosequencing.</title>
        <authorList>
            <person name="Tauch A."/>
            <person name="Trost E."/>
            <person name="Tilker A."/>
            <person name="Ludewig U."/>
            <person name="Schneiker S."/>
            <person name="Goesmann A."/>
            <person name="Arnold W."/>
            <person name="Bekel T."/>
            <person name="Brinkrolf K."/>
            <person name="Brune I."/>
            <person name="Goetker S."/>
            <person name="Kalinowski J."/>
            <person name="Kamp P.-B."/>
            <person name="Lobo F.P."/>
            <person name="Viehoever P."/>
            <person name="Weisshaar B."/>
            <person name="Soriano F."/>
            <person name="Droege M."/>
            <person name="Puehler A."/>
        </authorList>
    </citation>
    <scope>NUCLEOTIDE SEQUENCE [LARGE SCALE GENOMIC DNA]</scope>
    <source>
        <strain>ATCC 43042 / DSM 7109</strain>
    </source>
</reference>
<accession>B1VHD3</accession>
<dbReference type="EMBL" id="AM942444">
    <property type="protein sequence ID" value="CAQ05174.1"/>
    <property type="molecule type" value="Genomic_DNA"/>
</dbReference>
<dbReference type="RefSeq" id="WP_012360462.1">
    <property type="nucleotide sequence ID" value="NC_010545.1"/>
</dbReference>
<dbReference type="SMR" id="B1VHD3"/>
<dbReference type="STRING" id="504474.cu1214"/>
<dbReference type="GeneID" id="60603995"/>
<dbReference type="KEGG" id="cur:cu1214"/>
<dbReference type="eggNOG" id="COG2001">
    <property type="taxonomic scope" value="Bacteria"/>
</dbReference>
<dbReference type="HOGENOM" id="CLU_107907_0_5_11"/>
<dbReference type="Proteomes" id="UP000001727">
    <property type="component" value="Chromosome"/>
</dbReference>
<dbReference type="GO" id="GO:0005737">
    <property type="term" value="C:cytoplasm"/>
    <property type="evidence" value="ECO:0007669"/>
    <property type="project" value="UniProtKB-UniRule"/>
</dbReference>
<dbReference type="GO" id="GO:0009295">
    <property type="term" value="C:nucleoid"/>
    <property type="evidence" value="ECO:0007669"/>
    <property type="project" value="UniProtKB-SubCell"/>
</dbReference>
<dbReference type="GO" id="GO:0003700">
    <property type="term" value="F:DNA-binding transcription factor activity"/>
    <property type="evidence" value="ECO:0007669"/>
    <property type="project" value="UniProtKB-UniRule"/>
</dbReference>
<dbReference type="GO" id="GO:0000976">
    <property type="term" value="F:transcription cis-regulatory region binding"/>
    <property type="evidence" value="ECO:0007669"/>
    <property type="project" value="TreeGrafter"/>
</dbReference>
<dbReference type="GO" id="GO:2000143">
    <property type="term" value="P:negative regulation of DNA-templated transcription initiation"/>
    <property type="evidence" value="ECO:0007669"/>
    <property type="project" value="TreeGrafter"/>
</dbReference>
<dbReference type="CDD" id="cd16321">
    <property type="entry name" value="MraZ_C"/>
    <property type="match status" value="1"/>
</dbReference>
<dbReference type="CDD" id="cd16320">
    <property type="entry name" value="MraZ_N"/>
    <property type="match status" value="1"/>
</dbReference>
<dbReference type="Gene3D" id="3.40.1550.20">
    <property type="entry name" value="Transcriptional regulator MraZ domain"/>
    <property type="match status" value="1"/>
</dbReference>
<dbReference type="HAMAP" id="MF_01008">
    <property type="entry name" value="MraZ"/>
    <property type="match status" value="1"/>
</dbReference>
<dbReference type="InterPro" id="IPR003444">
    <property type="entry name" value="MraZ"/>
</dbReference>
<dbReference type="InterPro" id="IPR035644">
    <property type="entry name" value="MraZ_C"/>
</dbReference>
<dbReference type="InterPro" id="IPR020603">
    <property type="entry name" value="MraZ_dom"/>
</dbReference>
<dbReference type="InterPro" id="IPR035642">
    <property type="entry name" value="MraZ_N"/>
</dbReference>
<dbReference type="InterPro" id="IPR038619">
    <property type="entry name" value="MraZ_sf"/>
</dbReference>
<dbReference type="InterPro" id="IPR007159">
    <property type="entry name" value="SpoVT-AbrB_dom"/>
</dbReference>
<dbReference type="InterPro" id="IPR037914">
    <property type="entry name" value="SpoVT-AbrB_sf"/>
</dbReference>
<dbReference type="NCBIfam" id="TIGR00242">
    <property type="entry name" value="division/cell wall cluster transcriptional repressor MraZ"/>
    <property type="match status" value="1"/>
</dbReference>
<dbReference type="PANTHER" id="PTHR34701">
    <property type="entry name" value="TRANSCRIPTIONAL REGULATOR MRAZ"/>
    <property type="match status" value="1"/>
</dbReference>
<dbReference type="PANTHER" id="PTHR34701:SF1">
    <property type="entry name" value="TRANSCRIPTIONAL REGULATOR MRAZ"/>
    <property type="match status" value="1"/>
</dbReference>
<dbReference type="Pfam" id="PF02381">
    <property type="entry name" value="MraZ"/>
    <property type="match status" value="2"/>
</dbReference>
<dbReference type="SUPFAM" id="SSF89447">
    <property type="entry name" value="AbrB/MazE/MraZ-like"/>
    <property type="match status" value="1"/>
</dbReference>
<dbReference type="PROSITE" id="PS51740">
    <property type="entry name" value="SPOVT_ABRB"/>
    <property type="match status" value="2"/>
</dbReference>
<name>MRAZ_CORU7</name>
<protein>
    <recommendedName>
        <fullName>Transcriptional regulator MraZ</fullName>
    </recommendedName>
</protein>
<organism>
    <name type="scientific">Corynebacterium urealyticum (strain ATCC 43042 / DSM 7109)</name>
    <dbReference type="NCBI Taxonomy" id="504474"/>
    <lineage>
        <taxon>Bacteria</taxon>
        <taxon>Bacillati</taxon>
        <taxon>Actinomycetota</taxon>
        <taxon>Actinomycetes</taxon>
        <taxon>Mycobacteriales</taxon>
        <taxon>Corynebacteriaceae</taxon>
        <taxon>Corynebacterium</taxon>
    </lineage>
</organism>
<sequence>MFFGTFTPKLDDKGRLTLPAKFREELKDGLMVVKGQDHSLAIYPREEFLLRARKAAAASRSNPQARAFVRNLAASADEQDLDSQGRISVSAAHREYAGLKKECVVIGSVDFLEIWDAQAWEEYSAAHEADFAAGDDEAFANFL</sequence>
<evidence type="ECO:0000255" key="1">
    <source>
        <dbReference type="HAMAP-Rule" id="MF_01008"/>
    </source>
</evidence>
<evidence type="ECO:0000255" key="2">
    <source>
        <dbReference type="PROSITE-ProRule" id="PRU01076"/>
    </source>
</evidence>
<gene>
    <name evidence="1" type="primary">mraZ</name>
    <name type="ordered locus">cu1214</name>
</gene>